<name>BAFA_XENLA</name>
<organism>
    <name type="scientific">Xenopus laevis</name>
    <name type="common">African clawed frog</name>
    <dbReference type="NCBI Taxonomy" id="8355"/>
    <lineage>
        <taxon>Eukaryota</taxon>
        <taxon>Metazoa</taxon>
        <taxon>Chordata</taxon>
        <taxon>Craniata</taxon>
        <taxon>Vertebrata</taxon>
        <taxon>Euteleostomi</taxon>
        <taxon>Amphibia</taxon>
        <taxon>Batrachia</taxon>
        <taxon>Anura</taxon>
        <taxon>Pipoidea</taxon>
        <taxon>Pipidae</taxon>
        <taxon>Xenopodinae</taxon>
        <taxon>Xenopus</taxon>
        <taxon>Xenopus</taxon>
    </lineage>
</organism>
<dbReference type="EMBL" id="BC068883">
    <property type="protein sequence ID" value="AAH68883.1"/>
    <property type="molecule type" value="mRNA"/>
</dbReference>
<dbReference type="EMBL" id="BC133759">
    <property type="protein sequence ID" value="AAI33760.1"/>
    <property type="molecule type" value="mRNA"/>
</dbReference>
<dbReference type="RefSeq" id="NP_001084558.1">
    <property type="nucleotide sequence ID" value="NM_001091089.1"/>
</dbReference>
<dbReference type="SMR" id="Q6NTS2"/>
<dbReference type="DNASU" id="414508"/>
<dbReference type="GeneID" id="414508"/>
<dbReference type="KEGG" id="xla:414508"/>
<dbReference type="AGR" id="Xenbase:XB-GENE-6078848"/>
<dbReference type="CTD" id="414508"/>
<dbReference type="Xenbase" id="XB-GENE-6078848">
    <property type="gene designation" value="banf1.L"/>
</dbReference>
<dbReference type="OMA" id="KHRDFMA"/>
<dbReference type="OrthoDB" id="9997163at2759"/>
<dbReference type="Proteomes" id="UP000186698">
    <property type="component" value="Chromosome 4L"/>
</dbReference>
<dbReference type="Bgee" id="414508">
    <property type="expression patterns" value="Expressed in gastrula and 19 other cell types or tissues"/>
</dbReference>
<dbReference type="GO" id="GO:0000785">
    <property type="term" value="C:chromatin"/>
    <property type="evidence" value="ECO:0000250"/>
    <property type="project" value="UniProtKB"/>
</dbReference>
<dbReference type="GO" id="GO:0000793">
    <property type="term" value="C:condensed chromosome"/>
    <property type="evidence" value="ECO:0000318"/>
    <property type="project" value="GO_Central"/>
</dbReference>
<dbReference type="GO" id="GO:0005737">
    <property type="term" value="C:cytoplasm"/>
    <property type="evidence" value="ECO:0007669"/>
    <property type="project" value="UniProtKB-SubCell"/>
</dbReference>
<dbReference type="GO" id="GO:0005635">
    <property type="term" value="C:nuclear envelope"/>
    <property type="evidence" value="ECO:0000314"/>
    <property type="project" value="UniProtKB"/>
</dbReference>
<dbReference type="GO" id="GO:0005634">
    <property type="term" value="C:nucleus"/>
    <property type="evidence" value="ECO:0000318"/>
    <property type="project" value="GO_Central"/>
</dbReference>
<dbReference type="GO" id="GO:0003677">
    <property type="term" value="F:DNA binding"/>
    <property type="evidence" value="ECO:0000318"/>
    <property type="project" value="GO_Central"/>
</dbReference>
<dbReference type="GO" id="GO:0051276">
    <property type="term" value="P:chromosome organization"/>
    <property type="evidence" value="ECO:0000318"/>
    <property type="project" value="GO_Central"/>
</dbReference>
<dbReference type="GO" id="GO:0010836">
    <property type="term" value="P:negative regulation of protein ADP-ribosylation"/>
    <property type="evidence" value="ECO:0000250"/>
    <property type="project" value="UniProtKB"/>
</dbReference>
<dbReference type="GO" id="GO:0006979">
    <property type="term" value="P:response to oxidative stress"/>
    <property type="evidence" value="ECO:0000250"/>
    <property type="project" value="UniProtKB"/>
</dbReference>
<dbReference type="FunFam" id="1.10.150.40:FF:000001">
    <property type="entry name" value="Barrier-to-autointegration factor B"/>
    <property type="match status" value="1"/>
</dbReference>
<dbReference type="Gene3D" id="1.10.150.40">
    <property type="entry name" value="Barrier-to-autointegration factor, BAF"/>
    <property type="match status" value="1"/>
</dbReference>
<dbReference type="InterPro" id="IPR051387">
    <property type="entry name" value="BAF"/>
</dbReference>
<dbReference type="InterPro" id="IPR004122">
    <property type="entry name" value="BAF_prot"/>
</dbReference>
<dbReference type="InterPro" id="IPR036617">
    <property type="entry name" value="BAF_sf"/>
</dbReference>
<dbReference type="PANTHER" id="PTHR47507">
    <property type="entry name" value="BARRIER TO AUTOINTEGRATION FACTOR 2"/>
    <property type="match status" value="1"/>
</dbReference>
<dbReference type="PANTHER" id="PTHR47507:SF10">
    <property type="entry name" value="BARRIER-TO-AUTOINTEGRATION FACTOR B"/>
    <property type="match status" value="1"/>
</dbReference>
<dbReference type="Pfam" id="PF02961">
    <property type="entry name" value="SAM_BAF"/>
    <property type="match status" value="1"/>
</dbReference>
<dbReference type="SMART" id="SM01023">
    <property type="entry name" value="BAF"/>
    <property type="match status" value="1"/>
</dbReference>
<dbReference type="SUPFAM" id="SSF47798">
    <property type="entry name" value="Barrier-to-autointegration factor, BAF"/>
    <property type="match status" value="1"/>
</dbReference>
<evidence type="ECO:0000250" key="1">
    <source>
        <dbReference type="UniProtKB" id="O75531"/>
    </source>
</evidence>
<evidence type="ECO:0000269" key="2">
    <source>
    </source>
</evidence>
<evidence type="ECO:0000269" key="3">
    <source>
    </source>
</evidence>
<evidence type="ECO:0000305" key="4"/>
<protein>
    <recommendedName>
        <fullName>Barrier-to-autointegration factor A</fullName>
    </recommendedName>
</protein>
<reference key="1">
    <citation type="submission" date="2007-03" db="EMBL/GenBank/DDBJ databases">
        <authorList>
            <consortium name="NIH - Xenopus Gene Collection (XGC) project"/>
        </authorList>
    </citation>
    <scope>NUCLEOTIDE SEQUENCE [LARGE SCALE MRNA]</scope>
    <source>
        <tissue>Egg</tissue>
        <tissue>Embryo</tissue>
    </source>
</reference>
<reference key="2">
    <citation type="journal article" date="2006" name="Mol. Biol. Cell">
        <title>Barrier-to-autointegration factor phosphorylation on Ser-4 regulates emerin binding to lamin A in vitro and emerin localization in vivo.</title>
        <authorList>
            <person name="Bengtsson L."/>
            <person name="Wilson K.L."/>
        </authorList>
    </citation>
    <scope>PHOSPHORYLATION</scope>
</reference>
<reference key="3">
    <citation type="journal article" date="2009" name="Dev. Biol.">
        <title>Involvement of an inner nuclear membrane protein, Nemp1, in Xenopus neural development through an interaction with the chromatin protein BAF.</title>
        <authorList>
            <person name="Mamada H."/>
            <person name="Takahashi N."/>
            <person name="Taira M."/>
        </authorList>
    </citation>
    <scope>SUBCELLULAR LOCATION</scope>
    <scope>INTERACTION WITH NEMP1A AND NEMP1B</scope>
    <scope>DEVELOPMENTAL STAGE</scope>
</reference>
<gene>
    <name type="primary">banf1-a</name>
    <name type="synonym">baf-a</name>
</gene>
<comment type="function">
    <text evidence="1">Non-specific DNA-binding protein that plays key roles in mitotic nuclear reassembly, chromatin organization, DNA damage response, gene expression and intrinsic immunity against foreign DNA. Contains two non-specific double-stranded DNA (dsDNA)-binding sites which promote DNA cross-bridging. Plays a key role in nuclear membrane reformation at the end of mitosis by driving formation of a single nucleus in a spindle-independent manner. Transiently cross-bridges anaphase chromosomes via its ability to bridge distant DNA sites, leading to the formation of a dense chromatin network at the chromosome ensemble surface that limits membranes to the surface. Also acts as a negative regulator of innate immune activation by restricting CGAS activity toward self-DNA upon acute loss of nuclear membrane integrity. Outcompetes CGAS for DNA-binding, thereby preventing CGAS activation and subsequent damaging autoinflammatory responses. Also involved in DNA damage response; acts by inhibiting the ADP-ribosyltransferase activity of PARP1. Involved in the recognition of exogenous dsDNA in the cytosol: associates with exogenous dsDNA immediately after its appearance in the cytosol at endosome breakdown and is required to avoid autophagy.</text>
</comment>
<comment type="subunit">
    <text evidence="1 3">Homodimer (By similarity). Interacts with nemp1a and nemp1b (PubMed:19167377).</text>
</comment>
<comment type="subcellular location">
    <subcellularLocation>
        <location evidence="3">Nucleus</location>
    </subcellularLocation>
    <subcellularLocation>
        <location evidence="1">Chromosome</location>
    </subcellularLocation>
    <subcellularLocation>
        <location evidence="3">Nucleus envelope</location>
    </subcellularLocation>
    <subcellularLocation>
        <location evidence="1">Cytoplasm</location>
    </subcellularLocation>
    <text evidence="1">Significantly enriched at the nuclear inner membrane, diffusely throughout the nucleus during interphase and concentrated at the chromosomes during the M-phase.</text>
</comment>
<comment type="developmental stage">
    <text evidence="3">At the early gastrula stage, expressed mainly in the entire animal hemisphere. During neurulation, its expression becomes restricted to the anterior neuroectoderm. At the tailbud stage, expressed in various anterior regions including the anterior central nervous system (CNS), otic vesicles, and branchial arches.</text>
</comment>
<comment type="domain">
    <text evidence="1">Has a helix-hairpin-helix (HhH) structural motif conserved among proteins that bind non-specifically to DNA.</text>
</comment>
<comment type="PTM">
    <text evidence="2">Phosphorylated during S and M phases.</text>
</comment>
<comment type="similarity">
    <text evidence="4">Belongs to the BAF family.</text>
</comment>
<proteinExistence type="evidence at protein level"/>
<accession>Q6NTS2</accession>
<accession>A3KNC4</accession>
<sequence>MSSTSQKHRDFVAEPMGEKSVQCLAGIGEALGHRLEEKGFDKAYVVLGQFLVLKKDEELFKEWLKDICSANAKQSRDCYGCLKEWCDAFL</sequence>
<keyword id="KW-0158">Chromosome</keyword>
<keyword id="KW-0963">Cytoplasm</keyword>
<keyword id="KW-0238">DNA-binding</keyword>
<keyword id="KW-0539">Nucleus</keyword>
<keyword id="KW-0597">Phosphoprotein</keyword>
<keyword id="KW-1185">Reference proteome</keyword>
<feature type="chain" id="PRO_0000223614" description="Barrier-to-autointegration factor A">
    <location>
        <begin position="1"/>
        <end position="90"/>
    </location>
</feature>